<dbReference type="EMBL" id="X52318">
    <property type="protein sequence ID" value="CAA36554.1"/>
    <property type="molecule type" value="mRNA"/>
</dbReference>
<dbReference type="EMBL" id="M37585">
    <property type="protein sequence ID" value="AAA30566.1"/>
    <property type="molecule type" value="mRNA"/>
</dbReference>
<dbReference type="EMBL" id="BC109743">
    <property type="protein sequence ID" value="AAI09744.1"/>
    <property type="molecule type" value="mRNA"/>
</dbReference>
<dbReference type="PIR" id="S03642">
    <property type="entry name" value="S03642"/>
</dbReference>
<dbReference type="RefSeq" id="NP_777234.1">
    <property type="nucleotide sequence ID" value="NM_174809.2"/>
</dbReference>
<dbReference type="RefSeq" id="XP_010804249.1">
    <property type="nucleotide sequence ID" value="XM_010805947.2"/>
</dbReference>
<dbReference type="SMR" id="P0C0S4"/>
<dbReference type="FunCoup" id="P0C0S4">
    <property type="interactions" value="3249"/>
</dbReference>
<dbReference type="STRING" id="9913.ENSBTAP00000005802"/>
<dbReference type="PeptideAtlas" id="P0C0S4"/>
<dbReference type="GeneID" id="287016"/>
<dbReference type="KEGG" id="bta:287016"/>
<dbReference type="CTD" id="3015"/>
<dbReference type="VEuPathDB" id="HostDB:ENSBTAG00000004428"/>
<dbReference type="InParanoid" id="P0C0S4"/>
<dbReference type="OMA" id="PVGRIHT"/>
<dbReference type="OrthoDB" id="9709081at2759"/>
<dbReference type="CD-CODE" id="D7FE2080">
    <property type="entry name" value="Nucleolus"/>
</dbReference>
<dbReference type="Proteomes" id="UP000009136">
    <property type="component" value="Chromosome 6"/>
</dbReference>
<dbReference type="Bgee" id="ENSBTAG00000004428">
    <property type="expression patterns" value="Expressed in spermatocyte and 105 other cell types or tissues"/>
</dbReference>
<dbReference type="GO" id="GO:0000786">
    <property type="term" value="C:nucleosome"/>
    <property type="evidence" value="ECO:0000318"/>
    <property type="project" value="GO_Central"/>
</dbReference>
<dbReference type="GO" id="GO:0005634">
    <property type="term" value="C:nucleus"/>
    <property type="evidence" value="ECO:0000318"/>
    <property type="project" value="GO_Central"/>
</dbReference>
<dbReference type="GO" id="GO:0003677">
    <property type="term" value="F:DNA binding"/>
    <property type="evidence" value="ECO:0007669"/>
    <property type="project" value="UniProtKB-KW"/>
</dbReference>
<dbReference type="GO" id="GO:0046982">
    <property type="term" value="F:protein heterodimerization activity"/>
    <property type="evidence" value="ECO:0007669"/>
    <property type="project" value="InterPro"/>
</dbReference>
<dbReference type="GO" id="GO:0030527">
    <property type="term" value="F:structural constituent of chromatin"/>
    <property type="evidence" value="ECO:0000318"/>
    <property type="project" value="GO_Central"/>
</dbReference>
<dbReference type="GO" id="GO:0031507">
    <property type="term" value="P:heterochromatin formation"/>
    <property type="evidence" value="ECO:0000318"/>
    <property type="project" value="GO_Central"/>
</dbReference>
<dbReference type="CDD" id="cd00074">
    <property type="entry name" value="HFD_H2A"/>
    <property type="match status" value="1"/>
</dbReference>
<dbReference type="FunFam" id="1.10.20.10:FF:000005">
    <property type="entry name" value="Histone H2A"/>
    <property type="match status" value="1"/>
</dbReference>
<dbReference type="Gene3D" id="1.10.20.10">
    <property type="entry name" value="Histone, subunit A"/>
    <property type="match status" value="1"/>
</dbReference>
<dbReference type="InterPro" id="IPR009072">
    <property type="entry name" value="Histone-fold"/>
</dbReference>
<dbReference type="InterPro" id="IPR002119">
    <property type="entry name" value="Histone_H2A"/>
</dbReference>
<dbReference type="InterPro" id="IPR007125">
    <property type="entry name" value="Histone_H2A/H2B/H3"/>
</dbReference>
<dbReference type="InterPro" id="IPR032454">
    <property type="entry name" value="Histone_H2A_C"/>
</dbReference>
<dbReference type="InterPro" id="IPR032458">
    <property type="entry name" value="Histone_H2A_CS"/>
</dbReference>
<dbReference type="PANTHER" id="PTHR23430">
    <property type="entry name" value="HISTONE H2A"/>
    <property type="match status" value="1"/>
</dbReference>
<dbReference type="Pfam" id="PF00125">
    <property type="entry name" value="Histone"/>
    <property type="match status" value="1"/>
</dbReference>
<dbReference type="Pfam" id="PF16211">
    <property type="entry name" value="Histone_H2A_C"/>
    <property type="match status" value="1"/>
</dbReference>
<dbReference type="PRINTS" id="PR00620">
    <property type="entry name" value="HISTONEH2A"/>
</dbReference>
<dbReference type="SMART" id="SM00414">
    <property type="entry name" value="H2A"/>
    <property type="match status" value="1"/>
</dbReference>
<dbReference type="SUPFAM" id="SSF47113">
    <property type="entry name" value="Histone-fold"/>
    <property type="match status" value="1"/>
</dbReference>
<dbReference type="PROSITE" id="PS00046">
    <property type="entry name" value="HISTONE_H2A"/>
    <property type="match status" value="1"/>
</dbReference>
<proteinExistence type="evidence at protein level"/>
<accession>P0C0S4</accession>
<accession>P17317</accession>
<accession>Q32L66</accession>
<keyword id="KW-0007">Acetylation</keyword>
<keyword id="KW-0158">Chromosome</keyword>
<keyword id="KW-0903">Direct protein sequencing</keyword>
<keyword id="KW-0238">DNA-binding</keyword>
<keyword id="KW-1017">Isopeptide bond</keyword>
<keyword id="KW-0488">Methylation</keyword>
<keyword id="KW-0544">Nucleosome core</keyword>
<keyword id="KW-0539">Nucleus</keyword>
<keyword id="KW-1185">Reference proteome</keyword>
<keyword id="KW-0832">Ubl conjugation</keyword>
<sequence>MAGGKAGKDSGKAKTKAVSRSQRAGLQFPVGRIHRHLKSRTTSHGRVGATAAVYSAAILEYLTAEVLELAGNASKDLKVKRITPRHLQLAIRGDEELDSLIKATIAGGGVIPHIHKSLIGKKGQQKTV</sequence>
<comment type="function">
    <text evidence="2 3 5">Variant histone H2A which replaces conventional H2A in a subset of nucleosomes. Nucleosomes wrap and compact DNA into chromatin, limiting DNA accessibility to the cellular machineries which require DNA as a template. Histones thereby play a central role in transcription regulation, DNA repair, DNA replication and chromosomal stability. DNA accessibility is regulated via a complex set of post-translational modifications of histones, also called histone code, and nucleosome remodeling. May be involved in the formation of constitutive heterochromatin. May be required for chromosome segregation during cell division (By similarity).</text>
</comment>
<comment type="subunit">
    <text evidence="2 3">The nucleosome is a histone octamer containing two molecules each of H2A, H2B, H3 and H4 assembled in one H3-H4 heterotetramer and two H2A-H2B heterodimers. The octamer wraps approximately 147 bp of DNA. H2A or its variant H2AZ1 forms a heterodimer with H2B. H2AZ1 interacts with INCENP. Interacts (via M6 cassette) with ANP32E; leading to removal of H2A.Z/H2AZ1 from the nucleosome. Interacts with VPS72 (via N-terminal domain); the interaction is enhanced by VPS72 phosphorylation which is promoted by ZNHIT1. Interacts with PWWP2A. Interacts with FH (when phosphorylated by PRKDC). Interacts with ZNHIT1; the interaction results in recruitment of H2AZ1 to the MYOG promoter region which is required for muscle-specific gene expression (By similarity).</text>
</comment>
<comment type="subcellular location">
    <subcellularLocation>
        <location>Nucleus</location>
    </subcellularLocation>
    <subcellularLocation>
        <location>Chromosome</location>
    </subcellularLocation>
</comment>
<comment type="PTM">
    <text evidence="2">Monoubiquitination of Lys-122 gives a specific tag for epigenetic transcriptional repression.</text>
</comment>
<comment type="PTM">
    <text evidence="2 3">Acetylated on Lys-5, Lys-8, Lys-12 and Lys-14 by KAT2A; KAT2A is recruited by the XPC complex in absence of DNA damage (By similarity). Acetylated on Lys-5, Lys-8 and Lys-12 during interphase; acetylation disappears at mitosis (By similarity). Acetylation by the NuA4 histone acetyltransferase complex is required for hematopoietic stem cell maintenance (By similarity).</text>
</comment>
<comment type="PTM">
    <text evidence="6">Not phosphorylated.</text>
</comment>
<comment type="PTM">
    <text evidence="2">Monomethylated on Lys-5 and Lys-8 by SETD6. SETD6 predominantly methylates Lys-8, lys-5 being a possible secondary site.</text>
</comment>
<comment type="PTM">
    <text evidence="2">Lactylated in macrophages by EP300/P300 by using lactoyl-CoA directly derived from endogenous or exogenous lactate, leading to stimulates gene transcription.</text>
</comment>
<comment type="similarity">
    <text evidence="7">Belongs to the histone H2A family.</text>
</comment>
<organism>
    <name type="scientific">Bos taurus</name>
    <name type="common">Bovine</name>
    <dbReference type="NCBI Taxonomy" id="9913"/>
    <lineage>
        <taxon>Eukaryota</taxon>
        <taxon>Metazoa</taxon>
        <taxon>Chordata</taxon>
        <taxon>Craniata</taxon>
        <taxon>Vertebrata</taxon>
        <taxon>Euteleostomi</taxon>
        <taxon>Mammalia</taxon>
        <taxon>Eutheria</taxon>
        <taxon>Laurasiatheria</taxon>
        <taxon>Artiodactyla</taxon>
        <taxon>Ruminantia</taxon>
        <taxon>Pecora</taxon>
        <taxon>Bovidae</taxon>
        <taxon>Bovinae</taxon>
        <taxon>Bos</taxon>
    </lineage>
</organism>
<protein>
    <recommendedName>
        <fullName>Histone H2A.Z</fullName>
        <shortName>H2A/z</shortName>
    </recommendedName>
</protein>
<feature type="initiator methionine" description="Removed" evidence="6">
    <location>
        <position position="1"/>
    </location>
</feature>
<feature type="chain" id="PRO_0000055296" description="Histone H2A.Z">
    <location>
        <begin position="2"/>
        <end position="128"/>
    </location>
</feature>
<feature type="region of interest" description="Disordered" evidence="4">
    <location>
        <begin position="1"/>
        <end position="25"/>
    </location>
</feature>
<feature type="region of interest" description="Required for interaction with INCENP" evidence="1">
    <location>
        <begin position="2"/>
        <end position="17"/>
    </location>
</feature>
<feature type="region of interest" description="M6 cassette" evidence="1">
    <location>
        <begin position="89"/>
        <end position="100"/>
    </location>
</feature>
<feature type="region of interest" description="Required for interaction with INCENP" evidence="1">
    <location>
        <begin position="93"/>
        <end position="103"/>
    </location>
</feature>
<feature type="region of interest" description="Required for interaction with PWWP2A" evidence="2">
    <location>
        <begin position="120"/>
        <end position="128"/>
    </location>
</feature>
<feature type="compositionally biased region" description="Basic and acidic residues" evidence="4">
    <location>
        <begin position="1"/>
        <end position="12"/>
    </location>
</feature>
<feature type="modified residue" description="N6-acetyllysine; alternate" evidence="2">
    <location>
        <position position="5"/>
    </location>
</feature>
<feature type="modified residue" description="N6-methyllysine; alternate" evidence="2">
    <location>
        <position position="5"/>
    </location>
</feature>
<feature type="modified residue" description="N6-acetyllysine; alternate" evidence="2">
    <location>
        <position position="8"/>
    </location>
</feature>
<feature type="modified residue" description="N6-methyllysine; alternate" evidence="2">
    <location>
        <position position="8"/>
    </location>
</feature>
<feature type="modified residue" description="N6-acetyllysine; alternate" evidence="2">
    <location>
        <position position="12"/>
    </location>
</feature>
<feature type="modified residue" description="N6-lactoyllysine; alternate" evidence="2">
    <location>
        <position position="12"/>
    </location>
</feature>
<feature type="modified residue" description="N6-acetyllysine; alternate" evidence="2">
    <location>
        <position position="14"/>
    </location>
</feature>
<feature type="modified residue" description="N6-lactoyllysine; alternate" evidence="2">
    <location>
        <position position="14"/>
    </location>
</feature>
<feature type="modified residue" description="N6-lactoyllysine" evidence="2">
    <location>
        <position position="116"/>
    </location>
</feature>
<feature type="cross-link" description="Glycyl lysine isopeptide (Lys-Gly) (interchain with G-Cter in ubiquitin)" evidence="2 7">
    <location>
        <position position="122"/>
    </location>
</feature>
<gene>
    <name type="primary">H2AZ1</name>
    <name type="synonym">H2AZ</name>
</gene>
<evidence type="ECO:0000250" key="1"/>
<evidence type="ECO:0000250" key="2">
    <source>
        <dbReference type="UniProtKB" id="P0C0S5"/>
    </source>
</evidence>
<evidence type="ECO:0000250" key="3">
    <source>
        <dbReference type="UniProtKB" id="P0C0S6"/>
    </source>
</evidence>
<evidence type="ECO:0000256" key="4">
    <source>
        <dbReference type="SAM" id="MobiDB-lite"/>
    </source>
</evidence>
<evidence type="ECO:0000269" key="5">
    <source>
    </source>
</evidence>
<evidence type="ECO:0000269" key="6">
    <source>
    </source>
</evidence>
<evidence type="ECO:0000305" key="7"/>
<reference key="1">
    <citation type="journal article" date="1988" name="Nucleic Acids Res.">
        <title>Sequence of cDNAs for mammalian H2A.Z, an evolutionarily diverged but highly conserved basal histone H2A isoprotein species.</title>
        <authorList>
            <person name="Hatch C.L."/>
            <person name="Bonner W.M."/>
        </authorList>
    </citation>
    <scope>NUCLEOTIDE SEQUENCE [MRNA]</scope>
    <source>
        <tissue>Brain</tissue>
    </source>
</reference>
<reference key="2">
    <citation type="submission" date="2005-11" db="EMBL/GenBank/DDBJ databases">
        <authorList>
            <consortium name="NIH - Mammalian Gene Collection (MGC) project"/>
        </authorList>
    </citation>
    <scope>NUCLEOTIDE SEQUENCE [LARGE SCALE MRNA]</scope>
    <source>
        <strain>Crossbred X Angus</strain>
        <tissue>Liver</tissue>
    </source>
</reference>
<reference key="3">
    <citation type="journal article" date="1983" name="FEBS Lett.">
        <title>Amino acid sequence of the N-terminal domain of calf thymus histone H2A.Z.</title>
        <authorList>
            <person name="Ball D.J."/>
            <person name="Slaughter C.A."/>
            <person name="Hensley P."/>
            <person name="Garrard W.T."/>
        </authorList>
    </citation>
    <scope>PROTEIN SEQUENCE OF 2-31</scope>
    <scope>LACK OF PHOSPHORYLATION</scope>
    <source>
        <tissue>Thymus</tissue>
    </source>
</reference>
<reference key="4">
    <citation type="journal article" date="1983" name="Science">
        <title>Minor histone 2A variants and ubiquinated forms in the native H2A:H2B dimer.</title>
        <authorList>
            <person name="Hatch C.L."/>
            <person name="Bonner W.M."/>
            <person name="Moudrianakis E.N."/>
        </authorList>
    </citation>
    <scope>FUNCTION</scope>
    <scope>UBIQUITINATION</scope>
</reference>
<reference key="5">
    <citation type="journal article" date="1989" name="Biochemistry">
        <title>Ubiquitinated histone H2B is preferentially located in transcriptionally active chromatin.</title>
        <authorList>
            <person name="Nickel B.E."/>
            <person name="Allis C.D."/>
            <person name="Davie J.R."/>
        </authorList>
    </citation>
    <scope>UBIQUITINATION</scope>
</reference>
<name>H2AZ_BOVIN</name>